<dbReference type="EC" id="7.1.1.-" evidence="1"/>
<dbReference type="EMBL" id="CP000450">
    <property type="protein sequence ID" value="ABI59190.1"/>
    <property type="molecule type" value="Genomic_DNA"/>
</dbReference>
<dbReference type="RefSeq" id="WP_011634014.1">
    <property type="nucleotide sequence ID" value="NC_008344.1"/>
</dbReference>
<dbReference type="SMR" id="Q0AHJ2"/>
<dbReference type="STRING" id="335283.Neut_0930"/>
<dbReference type="KEGG" id="net:Neut_0930"/>
<dbReference type="eggNOG" id="COG1143">
    <property type="taxonomic scope" value="Bacteria"/>
</dbReference>
<dbReference type="HOGENOM" id="CLU_067218_5_1_4"/>
<dbReference type="OrthoDB" id="9808559at2"/>
<dbReference type="Proteomes" id="UP000001966">
    <property type="component" value="Chromosome"/>
</dbReference>
<dbReference type="GO" id="GO:0005886">
    <property type="term" value="C:plasma membrane"/>
    <property type="evidence" value="ECO:0007669"/>
    <property type="project" value="UniProtKB-SubCell"/>
</dbReference>
<dbReference type="GO" id="GO:0051539">
    <property type="term" value="F:4 iron, 4 sulfur cluster binding"/>
    <property type="evidence" value="ECO:0007669"/>
    <property type="project" value="UniProtKB-KW"/>
</dbReference>
<dbReference type="GO" id="GO:0005506">
    <property type="term" value="F:iron ion binding"/>
    <property type="evidence" value="ECO:0007669"/>
    <property type="project" value="UniProtKB-UniRule"/>
</dbReference>
<dbReference type="GO" id="GO:0050136">
    <property type="term" value="F:NADH:ubiquinone reductase (non-electrogenic) activity"/>
    <property type="evidence" value="ECO:0007669"/>
    <property type="project" value="UniProtKB-UniRule"/>
</dbReference>
<dbReference type="GO" id="GO:0048038">
    <property type="term" value="F:quinone binding"/>
    <property type="evidence" value="ECO:0007669"/>
    <property type="project" value="UniProtKB-KW"/>
</dbReference>
<dbReference type="GO" id="GO:0009060">
    <property type="term" value="P:aerobic respiration"/>
    <property type="evidence" value="ECO:0007669"/>
    <property type="project" value="TreeGrafter"/>
</dbReference>
<dbReference type="FunFam" id="3.30.70.3270:FF:000003">
    <property type="entry name" value="NADH-quinone oxidoreductase subunit I"/>
    <property type="match status" value="1"/>
</dbReference>
<dbReference type="Gene3D" id="3.30.70.3270">
    <property type="match status" value="1"/>
</dbReference>
<dbReference type="HAMAP" id="MF_01351">
    <property type="entry name" value="NDH1_NuoI"/>
    <property type="match status" value="1"/>
</dbReference>
<dbReference type="InterPro" id="IPR017896">
    <property type="entry name" value="4Fe4S_Fe-S-bd"/>
</dbReference>
<dbReference type="InterPro" id="IPR017900">
    <property type="entry name" value="4Fe4S_Fe_S_CS"/>
</dbReference>
<dbReference type="InterPro" id="IPR010226">
    <property type="entry name" value="NADH_quinone_OxRdtase_chainI"/>
</dbReference>
<dbReference type="NCBIfam" id="TIGR01971">
    <property type="entry name" value="NuoI"/>
    <property type="match status" value="1"/>
</dbReference>
<dbReference type="NCBIfam" id="NF004538">
    <property type="entry name" value="PRK05888.1-4"/>
    <property type="match status" value="1"/>
</dbReference>
<dbReference type="NCBIfam" id="NF004539">
    <property type="entry name" value="PRK05888.1-5"/>
    <property type="match status" value="1"/>
</dbReference>
<dbReference type="PANTHER" id="PTHR10849:SF20">
    <property type="entry name" value="NADH DEHYDROGENASE [UBIQUINONE] IRON-SULFUR PROTEIN 8, MITOCHONDRIAL"/>
    <property type="match status" value="1"/>
</dbReference>
<dbReference type="PANTHER" id="PTHR10849">
    <property type="entry name" value="NADH DEHYDROGENASE UBIQUINONE IRON-SULFUR PROTEIN 8, MITOCHONDRIAL"/>
    <property type="match status" value="1"/>
</dbReference>
<dbReference type="Pfam" id="PF12838">
    <property type="entry name" value="Fer4_7"/>
    <property type="match status" value="1"/>
</dbReference>
<dbReference type="SUPFAM" id="SSF54862">
    <property type="entry name" value="4Fe-4S ferredoxins"/>
    <property type="match status" value="1"/>
</dbReference>
<dbReference type="PROSITE" id="PS00198">
    <property type="entry name" value="4FE4S_FER_1"/>
    <property type="match status" value="2"/>
</dbReference>
<dbReference type="PROSITE" id="PS51379">
    <property type="entry name" value="4FE4S_FER_2"/>
    <property type="match status" value="2"/>
</dbReference>
<sequence length="162" mass="18745">MERIKRFLKSFLLFELLKGMKVTGRYLFAPKVTVHYPEEKTPQSPRFRGLHALRRYPNGEERCIACKLCEAVCPALAITIESEQRDDGTRRTTRYDIDLIKCIFCGFCEEACPVDAIVETRVLEYHGEVRGDLTYTKEMLLAVGDRYEEQIAKDRAADAPYR</sequence>
<protein>
    <recommendedName>
        <fullName evidence="1">NADH-quinone oxidoreductase subunit I</fullName>
        <ecNumber evidence="1">7.1.1.-</ecNumber>
    </recommendedName>
    <alternativeName>
        <fullName evidence="1">NADH dehydrogenase I subunit I</fullName>
    </alternativeName>
    <alternativeName>
        <fullName evidence="1">NDH-1 subunit I</fullName>
    </alternativeName>
</protein>
<proteinExistence type="inferred from homology"/>
<keyword id="KW-0004">4Fe-4S</keyword>
<keyword id="KW-0997">Cell inner membrane</keyword>
<keyword id="KW-1003">Cell membrane</keyword>
<keyword id="KW-0408">Iron</keyword>
<keyword id="KW-0411">Iron-sulfur</keyword>
<keyword id="KW-0472">Membrane</keyword>
<keyword id="KW-0479">Metal-binding</keyword>
<keyword id="KW-0520">NAD</keyword>
<keyword id="KW-0874">Quinone</keyword>
<keyword id="KW-0677">Repeat</keyword>
<keyword id="KW-1278">Translocase</keyword>
<keyword id="KW-0830">Ubiquinone</keyword>
<name>NUOI_NITEC</name>
<accession>Q0AHJ2</accession>
<evidence type="ECO:0000255" key="1">
    <source>
        <dbReference type="HAMAP-Rule" id="MF_01351"/>
    </source>
</evidence>
<gene>
    <name evidence="1" type="primary">nuoI</name>
    <name type="ordered locus">Neut_0930</name>
</gene>
<comment type="function">
    <text evidence="1">NDH-1 shuttles electrons from NADH, via FMN and iron-sulfur (Fe-S) centers, to quinones in the respiratory chain. The immediate electron acceptor for the enzyme in this species is believed to be ubiquinone. Couples the redox reaction to proton translocation (for every two electrons transferred, four hydrogen ions are translocated across the cytoplasmic membrane), and thus conserves the redox energy in a proton gradient.</text>
</comment>
<comment type="catalytic activity">
    <reaction evidence="1">
        <text>a quinone + NADH + 5 H(+)(in) = a quinol + NAD(+) + 4 H(+)(out)</text>
        <dbReference type="Rhea" id="RHEA:57888"/>
        <dbReference type="ChEBI" id="CHEBI:15378"/>
        <dbReference type="ChEBI" id="CHEBI:24646"/>
        <dbReference type="ChEBI" id="CHEBI:57540"/>
        <dbReference type="ChEBI" id="CHEBI:57945"/>
        <dbReference type="ChEBI" id="CHEBI:132124"/>
    </reaction>
</comment>
<comment type="cofactor">
    <cofactor evidence="1">
        <name>[4Fe-4S] cluster</name>
        <dbReference type="ChEBI" id="CHEBI:49883"/>
    </cofactor>
    <text evidence="1">Binds 2 [4Fe-4S] clusters per subunit.</text>
</comment>
<comment type="subunit">
    <text evidence="1">NDH-1 is composed of 14 different subunits. Subunits NuoA, H, J, K, L, M, N constitute the membrane sector of the complex.</text>
</comment>
<comment type="subcellular location">
    <subcellularLocation>
        <location evidence="1">Cell inner membrane</location>
        <topology evidence="1">Peripheral membrane protein</topology>
    </subcellularLocation>
</comment>
<comment type="similarity">
    <text evidence="1">Belongs to the complex I 23 kDa subunit family.</text>
</comment>
<feature type="chain" id="PRO_0000298524" description="NADH-quinone oxidoreductase subunit I">
    <location>
        <begin position="1"/>
        <end position="162"/>
    </location>
</feature>
<feature type="domain" description="4Fe-4S ferredoxin-type 1" evidence="1">
    <location>
        <begin position="53"/>
        <end position="83"/>
    </location>
</feature>
<feature type="domain" description="4Fe-4S ferredoxin-type 2" evidence="1">
    <location>
        <begin position="93"/>
        <end position="122"/>
    </location>
</feature>
<feature type="binding site" evidence="1">
    <location>
        <position position="63"/>
    </location>
    <ligand>
        <name>[4Fe-4S] cluster</name>
        <dbReference type="ChEBI" id="CHEBI:49883"/>
        <label>1</label>
    </ligand>
</feature>
<feature type="binding site" evidence="1">
    <location>
        <position position="66"/>
    </location>
    <ligand>
        <name>[4Fe-4S] cluster</name>
        <dbReference type="ChEBI" id="CHEBI:49883"/>
        <label>1</label>
    </ligand>
</feature>
<feature type="binding site" evidence="1">
    <location>
        <position position="69"/>
    </location>
    <ligand>
        <name>[4Fe-4S] cluster</name>
        <dbReference type="ChEBI" id="CHEBI:49883"/>
        <label>1</label>
    </ligand>
</feature>
<feature type="binding site" evidence="1">
    <location>
        <position position="73"/>
    </location>
    <ligand>
        <name>[4Fe-4S] cluster</name>
        <dbReference type="ChEBI" id="CHEBI:49883"/>
        <label>2</label>
    </ligand>
</feature>
<feature type="binding site" evidence="1">
    <location>
        <position position="102"/>
    </location>
    <ligand>
        <name>[4Fe-4S] cluster</name>
        <dbReference type="ChEBI" id="CHEBI:49883"/>
        <label>2</label>
    </ligand>
</feature>
<feature type="binding site" evidence="1">
    <location>
        <position position="105"/>
    </location>
    <ligand>
        <name>[4Fe-4S] cluster</name>
        <dbReference type="ChEBI" id="CHEBI:49883"/>
        <label>2</label>
    </ligand>
</feature>
<feature type="binding site" evidence="1">
    <location>
        <position position="108"/>
    </location>
    <ligand>
        <name>[4Fe-4S] cluster</name>
        <dbReference type="ChEBI" id="CHEBI:49883"/>
        <label>2</label>
    </ligand>
</feature>
<feature type="binding site" evidence="1">
    <location>
        <position position="112"/>
    </location>
    <ligand>
        <name>[4Fe-4S] cluster</name>
        <dbReference type="ChEBI" id="CHEBI:49883"/>
        <label>1</label>
    </ligand>
</feature>
<reference key="1">
    <citation type="journal article" date="2007" name="Environ. Microbiol.">
        <title>Whole-genome analysis of the ammonia-oxidizing bacterium, Nitrosomonas eutropha C91: implications for niche adaptation.</title>
        <authorList>
            <person name="Stein L.Y."/>
            <person name="Arp D.J."/>
            <person name="Berube P.M."/>
            <person name="Chain P.S."/>
            <person name="Hauser L."/>
            <person name="Jetten M.S."/>
            <person name="Klotz M.G."/>
            <person name="Larimer F.W."/>
            <person name="Norton J.M."/>
            <person name="Op den Camp H.J.M."/>
            <person name="Shin M."/>
            <person name="Wei X."/>
        </authorList>
    </citation>
    <scope>NUCLEOTIDE SEQUENCE [LARGE SCALE GENOMIC DNA]</scope>
    <source>
        <strain>DSM 101675 / C91 / Nm57</strain>
    </source>
</reference>
<organism>
    <name type="scientific">Nitrosomonas eutropha (strain DSM 101675 / C91 / Nm57)</name>
    <dbReference type="NCBI Taxonomy" id="335283"/>
    <lineage>
        <taxon>Bacteria</taxon>
        <taxon>Pseudomonadati</taxon>
        <taxon>Pseudomonadota</taxon>
        <taxon>Betaproteobacteria</taxon>
        <taxon>Nitrosomonadales</taxon>
        <taxon>Nitrosomonadaceae</taxon>
        <taxon>Nitrosomonas</taxon>
    </lineage>
</organism>